<keyword id="KW-0325">Glycoprotein</keyword>
<keyword id="KW-0391">Immunity</keyword>
<keyword id="KW-0399">Innate immunity</keyword>
<keyword id="KW-0964">Secreted</keyword>
<keyword id="KW-0732">Signal</keyword>
<reference evidence="7 8" key="1">
    <citation type="journal article" date="1998" name="Insect Biochem. Mol. Biol.">
        <title>Isolation and characterization of immune-related genes from the fall webworm, Hyphantria cunea, using PCR-based differential display and subtractive cloning.</title>
        <authorList>
            <person name="Shin S.W."/>
            <person name="Park S.-S."/>
            <person name="Park D.-S."/>
            <person name="Kim M.G."/>
            <person name="Kim S.C."/>
            <person name="Brey P.T."/>
            <person name="Park H.-Y."/>
        </authorList>
    </citation>
    <scope>NUCLEOTIDE SEQUENCE [MRNA]</scope>
    <scope>INDUCTION</scope>
    <source>
        <tissue evidence="6">Larva</tissue>
    </source>
</reference>
<feature type="signal peptide" evidence="3">
    <location>
        <begin position="1" status="less than"/>
        <end position="18"/>
    </location>
</feature>
<feature type="chain" id="PRO_0000002820" description="Beta-1,3-glucan-binding protein">
    <location>
        <begin position="19"/>
        <end position="481"/>
    </location>
</feature>
<feature type="domain" description="CBM39" evidence="5">
    <location>
        <begin position="20"/>
        <end position="120"/>
    </location>
</feature>
<feature type="domain" description="GH16" evidence="4">
    <location>
        <begin position="124"/>
        <end position="481"/>
    </location>
</feature>
<feature type="glycosylation site" description="N-linked (GlcNAc...) asparagine" evidence="3">
    <location>
        <position position="110"/>
    </location>
</feature>
<feature type="non-terminal residue" evidence="8">
    <location>
        <position position="1"/>
    </location>
</feature>
<protein>
    <recommendedName>
        <fullName>Beta-1,3-glucan-binding protein</fullName>
        <shortName>BGBP</shortName>
    </recommendedName>
    <alternativeName>
        <fullName>Beta-1,3-glucan recognition protein</fullName>
        <shortName>BetaGRP</shortName>
    </alternativeName>
    <alternativeName>
        <fullName>Gram negative bacteria-binding protein</fullName>
    </alternativeName>
</protein>
<organism>
    <name type="scientific">Hyphantria cunea</name>
    <name type="common">Fall webworm moth</name>
    <name type="synonym">Phalaena cunea</name>
    <dbReference type="NCBI Taxonomy" id="39466"/>
    <lineage>
        <taxon>Eukaryota</taxon>
        <taxon>Metazoa</taxon>
        <taxon>Ecdysozoa</taxon>
        <taxon>Arthropoda</taxon>
        <taxon>Hexapoda</taxon>
        <taxon>Insecta</taxon>
        <taxon>Pterygota</taxon>
        <taxon>Neoptera</taxon>
        <taxon>Endopterygota</taxon>
        <taxon>Lepidoptera</taxon>
        <taxon>Glossata</taxon>
        <taxon>Ditrysia</taxon>
        <taxon>Noctuoidea</taxon>
        <taxon>Erebidae</taxon>
        <taxon>Arctiinae</taxon>
        <taxon>Hyphantria</taxon>
    </lineage>
</organism>
<evidence type="ECO:0000250" key="1"/>
<evidence type="ECO:0000250" key="2">
    <source>
        <dbReference type="UniProtKB" id="Q76DI2"/>
    </source>
</evidence>
<evidence type="ECO:0000255" key="3"/>
<evidence type="ECO:0000255" key="4">
    <source>
        <dbReference type="PROSITE-ProRule" id="PRU01098"/>
    </source>
</evidence>
<evidence type="ECO:0000255" key="5">
    <source>
        <dbReference type="PROSITE-ProRule" id="PRU01314"/>
    </source>
</evidence>
<evidence type="ECO:0000269" key="6">
    <source>
    </source>
</evidence>
<evidence type="ECO:0000305" key="7"/>
<evidence type="ECO:0000312" key="8">
    <source>
        <dbReference type="EMBL" id="AAD09290.1"/>
    </source>
</evidence>
<dbReference type="EMBL" id="AF023916">
    <property type="protein sequence ID" value="AAD09290.1"/>
    <property type="molecule type" value="mRNA"/>
</dbReference>
<dbReference type="CAZy" id="CBM39">
    <property type="family name" value="Carbohydrate-Binding Module Family 39"/>
</dbReference>
<dbReference type="CAZy" id="GH16">
    <property type="family name" value="Glycoside Hydrolase Family 16"/>
</dbReference>
<dbReference type="GlyCosmos" id="O96363">
    <property type="glycosylation" value="1 site, No reported glycans"/>
</dbReference>
<dbReference type="GO" id="GO:0005576">
    <property type="term" value="C:extracellular region"/>
    <property type="evidence" value="ECO:0000250"/>
    <property type="project" value="UniProtKB"/>
</dbReference>
<dbReference type="GO" id="GO:0030246">
    <property type="term" value="F:carbohydrate binding"/>
    <property type="evidence" value="ECO:0007669"/>
    <property type="project" value="InterPro"/>
</dbReference>
<dbReference type="GO" id="GO:0004553">
    <property type="term" value="F:hydrolase activity, hydrolyzing O-glycosyl compounds"/>
    <property type="evidence" value="ECO:0007669"/>
    <property type="project" value="InterPro"/>
</dbReference>
<dbReference type="GO" id="GO:0005975">
    <property type="term" value="P:carbohydrate metabolic process"/>
    <property type="evidence" value="ECO:0007669"/>
    <property type="project" value="InterPro"/>
</dbReference>
<dbReference type="GO" id="GO:0042742">
    <property type="term" value="P:defense response to bacterium"/>
    <property type="evidence" value="ECO:0000250"/>
    <property type="project" value="UniProtKB"/>
</dbReference>
<dbReference type="GO" id="GO:0045087">
    <property type="term" value="P:innate immune response"/>
    <property type="evidence" value="ECO:0007669"/>
    <property type="project" value="UniProtKB-KW"/>
</dbReference>
<dbReference type="GO" id="GO:0045088">
    <property type="term" value="P:regulation of innate immune response"/>
    <property type="evidence" value="ECO:0000250"/>
    <property type="project" value="UniProtKB"/>
</dbReference>
<dbReference type="CDD" id="cd02179">
    <property type="entry name" value="GH16_beta_GRP"/>
    <property type="match status" value="1"/>
</dbReference>
<dbReference type="FunFam" id="2.60.120.200:FF:000235">
    <property type="entry name" value="Beta-1,3-glucan-binding protein"/>
    <property type="match status" value="1"/>
</dbReference>
<dbReference type="Gene3D" id="2.60.120.200">
    <property type="match status" value="1"/>
</dbReference>
<dbReference type="Gene3D" id="2.60.40.2140">
    <property type="entry name" value="Beta-1,3-glucan-recognition protein, N-terminal domain"/>
    <property type="match status" value="1"/>
</dbReference>
<dbReference type="InterPro" id="IPR031756">
    <property type="entry name" value="BGBP_N"/>
</dbReference>
<dbReference type="InterPro" id="IPR043030">
    <property type="entry name" value="BGBP_N_sf"/>
</dbReference>
<dbReference type="InterPro" id="IPR013320">
    <property type="entry name" value="ConA-like_dom_sf"/>
</dbReference>
<dbReference type="InterPro" id="IPR000757">
    <property type="entry name" value="GH16"/>
</dbReference>
<dbReference type="InterPro" id="IPR035806">
    <property type="entry name" value="GH16_GRP_C"/>
</dbReference>
<dbReference type="InterPro" id="IPR050546">
    <property type="entry name" value="Glycosyl_Hydrlase_16"/>
</dbReference>
<dbReference type="PANTHER" id="PTHR10963">
    <property type="entry name" value="GLYCOSYL HYDROLASE-RELATED"/>
    <property type="match status" value="1"/>
</dbReference>
<dbReference type="PANTHER" id="PTHR10963:SF60">
    <property type="entry name" value="GRAM-NEGATIVE BACTERIA-BINDING PROTEIN 1-RELATED"/>
    <property type="match status" value="1"/>
</dbReference>
<dbReference type="Pfam" id="PF15886">
    <property type="entry name" value="CBM39"/>
    <property type="match status" value="1"/>
</dbReference>
<dbReference type="Pfam" id="PF00722">
    <property type="entry name" value="Glyco_hydro_16"/>
    <property type="match status" value="1"/>
</dbReference>
<dbReference type="SUPFAM" id="SSF49899">
    <property type="entry name" value="Concanavalin A-like lectins/glucanases"/>
    <property type="match status" value="1"/>
</dbReference>
<dbReference type="PROSITE" id="PS51969">
    <property type="entry name" value="CBM39"/>
    <property type="match status" value="1"/>
</dbReference>
<dbReference type="PROSITE" id="PS51762">
    <property type="entry name" value="GH16_2"/>
    <property type="match status" value="1"/>
</dbReference>
<comment type="function">
    <text evidence="1">Involved in the recognition of invading microorganisms. Binds specifically to beta-1,3-glucan and activates the phenoloxidase cascade (By similarity).</text>
</comment>
<comment type="subcellular location">
    <subcellularLocation>
        <location evidence="2">Secreted</location>
    </subcellularLocation>
</comment>
<comment type="induction">
    <text evidence="6">By bacterial infection.</text>
</comment>
<comment type="similarity">
    <text evidence="7">Belongs to the insect beta-1,3-glucan binding protein family.</text>
</comment>
<sequence length="481" mass="53014">RCARVCAVLFLFIQISYGQYQVPQVTVQALKPRGFKASIPDSPSVSLFVFQGNINRAISKSDIGTISGEILKAKDGRWTFEDPNVELKVGDVVNYYVVVVSNRGGYIKDNLSFTVSALEDPSSTGTGTDPVPTPTTCRPTATKLRSGVACAGQTIFEENFNTFREDVWQIEQYIPVYSTEFPFVSYQHLSQDPTVAVTGGNLRITPKLQQRMPGFTDSSIYSGSLNIFSGCTAPAEACMKDAWGASILPPVVSGRITSKAFAFTYGTVFVKAKLPQGDWIYPEILLEPFLKKYGSTHYSSGVIKIASARGNRELTSGYTDYSNKMLFGGPVMNLQCYDTLLESKASSNGRQWGDDFHEYVLRWAPERITLSVDGVEWARVEPTASGLSGRFPQTCSKLPRTFLAAGTKMAPFDDHFYLTLGVAAGSITEFPDGVQTSGSRPKPWTNTGSKAMLHFWEDMDSWFATWNQPQLLVDYVKVVAL</sequence>
<accession>O96363</accession>
<name>BGBP_HYPCU</name>
<gene>
    <name evidence="8" type="primary">gnbp1</name>
</gene>
<proteinExistence type="evidence at transcript level"/>